<name>HIS4_MYXXD</name>
<sequence>MIAIPAIDLREGACVQLVGGSYAAEKVRVEEPLEALKQWRRHGFRAFHVVDLDAALGKGSNADAIFQLTAYERGLTFSVGGGVRDSDRVETVLSGGAEFVVVGTRAIEDAGWLADIANRFPGRVVVAADVKGREVVTRGWTAGSHRDIREVLAAFEPLPLGGLLVTAVHKEGQLSGVDLPLMREVASTSRHRLYASGGVTTMEDLRALAAAGAYGAVIGMALYTGRLDASAVAREFAG</sequence>
<organism>
    <name type="scientific">Myxococcus xanthus (strain DK1622)</name>
    <dbReference type="NCBI Taxonomy" id="246197"/>
    <lineage>
        <taxon>Bacteria</taxon>
        <taxon>Pseudomonadati</taxon>
        <taxon>Myxococcota</taxon>
        <taxon>Myxococcia</taxon>
        <taxon>Myxococcales</taxon>
        <taxon>Cystobacterineae</taxon>
        <taxon>Myxococcaceae</taxon>
        <taxon>Myxococcus</taxon>
    </lineage>
</organism>
<dbReference type="EC" id="5.3.1.16" evidence="1"/>
<dbReference type="EMBL" id="CP000113">
    <property type="protein sequence ID" value="ABF87088.1"/>
    <property type="molecule type" value="Genomic_DNA"/>
</dbReference>
<dbReference type="RefSeq" id="WP_011554229.1">
    <property type="nucleotide sequence ID" value="NC_008095.1"/>
</dbReference>
<dbReference type="SMR" id="Q1D4M2"/>
<dbReference type="STRING" id="246197.MXAN_4226"/>
<dbReference type="EnsemblBacteria" id="ABF87088">
    <property type="protein sequence ID" value="ABF87088"/>
    <property type="gene ID" value="MXAN_4226"/>
</dbReference>
<dbReference type="GeneID" id="41361543"/>
<dbReference type="KEGG" id="mxa:MXAN_4226"/>
<dbReference type="eggNOG" id="COG0106">
    <property type="taxonomic scope" value="Bacteria"/>
</dbReference>
<dbReference type="HOGENOM" id="CLU_048577_1_1_7"/>
<dbReference type="OrthoDB" id="9807749at2"/>
<dbReference type="UniPathway" id="UPA00031">
    <property type="reaction ID" value="UER00009"/>
</dbReference>
<dbReference type="Proteomes" id="UP000002402">
    <property type="component" value="Chromosome"/>
</dbReference>
<dbReference type="GO" id="GO:0005737">
    <property type="term" value="C:cytoplasm"/>
    <property type="evidence" value="ECO:0007669"/>
    <property type="project" value="UniProtKB-SubCell"/>
</dbReference>
<dbReference type="GO" id="GO:0003949">
    <property type="term" value="F:1-(5-phosphoribosyl)-5-[(5-phosphoribosylamino)methylideneamino]imidazole-4-carboxamide isomerase activity"/>
    <property type="evidence" value="ECO:0007669"/>
    <property type="project" value="UniProtKB-UniRule"/>
</dbReference>
<dbReference type="GO" id="GO:0000105">
    <property type="term" value="P:L-histidine biosynthetic process"/>
    <property type="evidence" value="ECO:0007669"/>
    <property type="project" value="UniProtKB-UniRule"/>
</dbReference>
<dbReference type="GO" id="GO:0000162">
    <property type="term" value="P:L-tryptophan biosynthetic process"/>
    <property type="evidence" value="ECO:0007669"/>
    <property type="project" value="TreeGrafter"/>
</dbReference>
<dbReference type="CDD" id="cd04732">
    <property type="entry name" value="HisA"/>
    <property type="match status" value="1"/>
</dbReference>
<dbReference type="FunFam" id="3.20.20.70:FF:000009">
    <property type="entry name" value="1-(5-phosphoribosyl)-5-[(5-phosphoribosylamino)methylideneamino] imidazole-4-carboxamide isomerase"/>
    <property type="match status" value="1"/>
</dbReference>
<dbReference type="Gene3D" id="3.20.20.70">
    <property type="entry name" value="Aldolase class I"/>
    <property type="match status" value="1"/>
</dbReference>
<dbReference type="HAMAP" id="MF_01014">
    <property type="entry name" value="HisA"/>
    <property type="match status" value="1"/>
</dbReference>
<dbReference type="InterPro" id="IPR013785">
    <property type="entry name" value="Aldolase_TIM"/>
</dbReference>
<dbReference type="InterPro" id="IPR006062">
    <property type="entry name" value="His_biosynth"/>
</dbReference>
<dbReference type="InterPro" id="IPR044524">
    <property type="entry name" value="Isoase_HisA-like"/>
</dbReference>
<dbReference type="InterPro" id="IPR023016">
    <property type="entry name" value="Isoase_HisA-like_bact"/>
</dbReference>
<dbReference type="InterPro" id="IPR011060">
    <property type="entry name" value="RibuloseP-bd_barrel"/>
</dbReference>
<dbReference type="PANTHER" id="PTHR43090">
    <property type="entry name" value="1-(5-PHOSPHORIBOSYL)-5-[(5-PHOSPHORIBOSYLAMINO)METHYLIDENEAMINO] IMIDAZOLE-4-CARBOXAMIDE ISOMERASE"/>
    <property type="match status" value="1"/>
</dbReference>
<dbReference type="PANTHER" id="PTHR43090:SF2">
    <property type="entry name" value="1-(5-PHOSPHORIBOSYL)-5-[(5-PHOSPHORIBOSYLAMINO)METHYLIDENEAMINO] IMIDAZOLE-4-CARBOXAMIDE ISOMERASE"/>
    <property type="match status" value="1"/>
</dbReference>
<dbReference type="Pfam" id="PF00977">
    <property type="entry name" value="His_biosynth"/>
    <property type="match status" value="1"/>
</dbReference>
<dbReference type="SUPFAM" id="SSF51366">
    <property type="entry name" value="Ribulose-phoshate binding barrel"/>
    <property type="match status" value="1"/>
</dbReference>
<keyword id="KW-0028">Amino-acid biosynthesis</keyword>
<keyword id="KW-0963">Cytoplasm</keyword>
<keyword id="KW-0368">Histidine biosynthesis</keyword>
<keyword id="KW-0413">Isomerase</keyword>
<keyword id="KW-1185">Reference proteome</keyword>
<proteinExistence type="inferred from homology"/>
<comment type="catalytic activity">
    <reaction evidence="1">
        <text>1-(5-phospho-beta-D-ribosyl)-5-[(5-phospho-beta-D-ribosylamino)methylideneamino]imidazole-4-carboxamide = 5-[(5-phospho-1-deoxy-D-ribulos-1-ylimino)methylamino]-1-(5-phospho-beta-D-ribosyl)imidazole-4-carboxamide</text>
        <dbReference type="Rhea" id="RHEA:15469"/>
        <dbReference type="ChEBI" id="CHEBI:58435"/>
        <dbReference type="ChEBI" id="CHEBI:58525"/>
        <dbReference type="EC" id="5.3.1.16"/>
    </reaction>
</comment>
<comment type="pathway">
    <text evidence="1">Amino-acid biosynthesis; L-histidine biosynthesis; L-histidine from 5-phospho-alpha-D-ribose 1-diphosphate: step 4/9.</text>
</comment>
<comment type="subcellular location">
    <subcellularLocation>
        <location evidence="1">Cytoplasm</location>
    </subcellularLocation>
</comment>
<comment type="similarity">
    <text evidence="1">Belongs to the HisA/HisF family.</text>
</comment>
<gene>
    <name evidence="1" type="primary">hisA</name>
    <name type="ordered locus">MXAN_4226</name>
</gene>
<accession>Q1D4M2</accession>
<feature type="chain" id="PRO_0000290497" description="1-(5-phosphoribosyl)-5-[(5-phosphoribosylamino)methylideneamino] imidazole-4-carboxamide isomerase">
    <location>
        <begin position="1"/>
        <end position="238"/>
    </location>
</feature>
<feature type="active site" description="Proton acceptor" evidence="1">
    <location>
        <position position="8"/>
    </location>
</feature>
<feature type="active site" description="Proton donor" evidence="1">
    <location>
        <position position="129"/>
    </location>
</feature>
<protein>
    <recommendedName>
        <fullName evidence="1">1-(5-phosphoribosyl)-5-[(5-phosphoribosylamino)methylideneamino] imidazole-4-carboxamide isomerase</fullName>
        <ecNumber evidence="1">5.3.1.16</ecNumber>
    </recommendedName>
    <alternativeName>
        <fullName evidence="1">Phosphoribosylformimino-5-aminoimidazole carboxamide ribotide isomerase</fullName>
    </alternativeName>
</protein>
<reference key="1">
    <citation type="journal article" date="2006" name="Proc. Natl. Acad. Sci. U.S.A.">
        <title>Evolution of sensory complexity recorded in a myxobacterial genome.</title>
        <authorList>
            <person name="Goldman B.S."/>
            <person name="Nierman W.C."/>
            <person name="Kaiser D."/>
            <person name="Slater S.C."/>
            <person name="Durkin A.S."/>
            <person name="Eisen J.A."/>
            <person name="Ronning C.M."/>
            <person name="Barbazuk W.B."/>
            <person name="Blanchard M."/>
            <person name="Field C."/>
            <person name="Halling C."/>
            <person name="Hinkle G."/>
            <person name="Iartchuk O."/>
            <person name="Kim H.S."/>
            <person name="Mackenzie C."/>
            <person name="Madupu R."/>
            <person name="Miller N."/>
            <person name="Shvartsbeyn A."/>
            <person name="Sullivan S.A."/>
            <person name="Vaudin M."/>
            <person name="Wiegand R."/>
            <person name="Kaplan H.B."/>
        </authorList>
    </citation>
    <scope>NUCLEOTIDE SEQUENCE [LARGE SCALE GENOMIC DNA]</scope>
    <source>
        <strain>DK1622</strain>
    </source>
</reference>
<evidence type="ECO:0000255" key="1">
    <source>
        <dbReference type="HAMAP-Rule" id="MF_01014"/>
    </source>
</evidence>